<protein>
    <recommendedName>
        <fullName evidence="1">UDP-N-acetylglucosamine--N-acetylmuramyl-(pentapeptide) pyrophosphoryl-undecaprenol N-acetylglucosamine transferase</fullName>
        <ecNumber evidence="1">2.4.1.227</ecNumber>
    </recommendedName>
    <alternativeName>
        <fullName evidence="1">Undecaprenyl-PP-MurNAc-pentapeptide-UDPGlcNAc GlcNAc transferase</fullName>
    </alternativeName>
</protein>
<feature type="chain" id="PRO_0000109204" description="UDP-N-acetylglucosamine--N-acetylmuramyl-(pentapeptide) pyrophosphoryl-undecaprenol N-acetylglucosamine transferase">
    <location>
        <begin position="1"/>
        <end position="385"/>
    </location>
</feature>
<feature type="binding site" evidence="1">
    <location>
        <begin position="11"/>
        <end position="13"/>
    </location>
    <ligand>
        <name>UDP-N-acetyl-alpha-D-glucosamine</name>
        <dbReference type="ChEBI" id="CHEBI:57705"/>
    </ligand>
</feature>
<feature type="binding site" evidence="1">
    <location>
        <position position="117"/>
    </location>
    <ligand>
        <name>UDP-N-acetyl-alpha-D-glucosamine</name>
        <dbReference type="ChEBI" id="CHEBI:57705"/>
    </ligand>
</feature>
<feature type="binding site" evidence="1">
    <location>
        <position position="160"/>
    </location>
    <ligand>
        <name>UDP-N-acetyl-alpha-D-glucosamine</name>
        <dbReference type="ChEBI" id="CHEBI:57705"/>
    </ligand>
</feature>
<feature type="binding site" evidence="1">
    <location>
        <position position="215"/>
    </location>
    <ligand>
        <name>UDP-N-acetyl-alpha-D-glucosamine</name>
        <dbReference type="ChEBI" id="CHEBI:57705"/>
    </ligand>
</feature>
<feature type="binding site" evidence="1">
    <location>
        <position position="317"/>
    </location>
    <ligand>
        <name>UDP-N-acetyl-alpha-D-glucosamine</name>
        <dbReference type="ChEBI" id="CHEBI:57705"/>
    </ligand>
</feature>
<keyword id="KW-0131">Cell cycle</keyword>
<keyword id="KW-0132">Cell division</keyword>
<keyword id="KW-0997">Cell inner membrane</keyword>
<keyword id="KW-1003">Cell membrane</keyword>
<keyword id="KW-0133">Cell shape</keyword>
<keyword id="KW-0961">Cell wall biogenesis/degradation</keyword>
<keyword id="KW-0328">Glycosyltransferase</keyword>
<keyword id="KW-0472">Membrane</keyword>
<keyword id="KW-0573">Peptidoglycan synthesis</keyword>
<keyword id="KW-1185">Reference proteome</keyword>
<keyword id="KW-0808">Transferase</keyword>
<name>MURG_RICPR</name>
<proteinExistence type="inferred from homology"/>
<accession>Q9ZDC0</accession>
<evidence type="ECO:0000255" key="1">
    <source>
        <dbReference type="HAMAP-Rule" id="MF_00033"/>
    </source>
</evidence>
<comment type="function">
    <text evidence="1">Cell wall formation. Catalyzes the transfer of a GlcNAc subunit on undecaprenyl-pyrophosphoryl-MurNAc-pentapeptide (lipid intermediate I) to form undecaprenyl-pyrophosphoryl-MurNAc-(pentapeptide)GlcNAc (lipid intermediate II).</text>
</comment>
<comment type="catalytic activity">
    <reaction evidence="1">
        <text>di-trans,octa-cis-undecaprenyl diphospho-N-acetyl-alpha-D-muramoyl-L-alanyl-D-glutamyl-meso-2,6-diaminopimeloyl-D-alanyl-D-alanine + UDP-N-acetyl-alpha-D-glucosamine = di-trans,octa-cis-undecaprenyl diphospho-[N-acetyl-alpha-D-glucosaminyl-(1-&gt;4)]-N-acetyl-alpha-D-muramoyl-L-alanyl-D-glutamyl-meso-2,6-diaminopimeloyl-D-alanyl-D-alanine + UDP + H(+)</text>
        <dbReference type="Rhea" id="RHEA:31227"/>
        <dbReference type="ChEBI" id="CHEBI:15378"/>
        <dbReference type="ChEBI" id="CHEBI:57705"/>
        <dbReference type="ChEBI" id="CHEBI:58223"/>
        <dbReference type="ChEBI" id="CHEBI:61387"/>
        <dbReference type="ChEBI" id="CHEBI:61388"/>
        <dbReference type="EC" id="2.4.1.227"/>
    </reaction>
</comment>
<comment type="pathway">
    <text evidence="1">Cell wall biogenesis; peptidoglycan biosynthesis.</text>
</comment>
<comment type="subcellular location">
    <subcellularLocation>
        <location evidence="1">Cell inner membrane</location>
        <topology evidence="1">Peripheral membrane protein</topology>
        <orientation evidence="1">Cytoplasmic side</orientation>
    </subcellularLocation>
</comment>
<comment type="similarity">
    <text evidence="1">Belongs to the glycosyltransferase 28 family. MurG subfamily.</text>
</comment>
<gene>
    <name evidence="1" type="primary">murG</name>
    <name type="ordered locus">RP412</name>
</gene>
<sequence length="385" mass="43534">MKKIILVAGGTGGHFFPAVALGEELIKRGYIVHFITDLRCKKYINKDMKIIFHILNLKRFSNIFLFLPILSITFLKSIRLIYNIKCCVIIGFGGYPVIAPMFAAIFLRIPIIIHEQNSYLGKVNKFFARFAKKIATSYEDIKNLPEFAKSKIVLTGGIVRKNIRELDSFMYSVSQHSLTKLTQTALTNTFNPLVKGRNDEFANSNIFTIFIFGGSQGAKLFSELIPASIKILMKKQPSLELNIIQQAALDHQVKIKDIYSKLNITYEFAEFFDNIALQYKVANLVISRAGASTIEELTYIGLPAIFIPLPSAADNHQYYNAKLLEDNKAGWCLEQNNISSEKLADKILDLISNRQLLEDASQNLLNRKKEGHVLLSNLIEDTVFL</sequence>
<reference key="1">
    <citation type="journal article" date="1998" name="Nature">
        <title>The genome sequence of Rickettsia prowazekii and the origin of mitochondria.</title>
        <authorList>
            <person name="Andersson S.G.E."/>
            <person name="Zomorodipour A."/>
            <person name="Andersson J.O."/>
            <person name="Sicheritz-Ponten T."/>
            <person name="Alsmark U.C.M."/>
            <person name="Podowski R.M."/>
            <person name="Naeslund A.K."/>
            <person name="Eriksson A.-S."/>
            <person name="Winkler H.H."/>
            <person name="Kurland C.G."/>
        </authorList>
    </citation>
    <scope>NUCLEOTIDE SEQUENCE [LARGE SCALE GENOMIC DNA]</scope>
    <source>
        <strain>Madrid E</strain>
    </source>
</reference>
<organism>
    <name type="scientific">Rickettsia prowazekii (strain Madrid E)</name>
    <dbReference type="NCBI Taxonomy" id="272947"/>
    <lineage>
        <taxon>Bacteria</taxon>
        <taxon>Pseudomonadati</taxon>
        <taxon>Pseudomonadota</taxon>
        <taxon>Alphaproteobacteria</taxon>
        <taxon>Rickettsiales</taxon>
        <taxon>Rickettsiaceae</taxon>
        <taxon>Rickettsieae</taxon>
        <taxon>Rickettsia</taxon>
        <taxon>typhus group</taxon>
    </lineage>
</organism>
<dbReference type="EC" id="2.4.1.227" evidence="1"/>
<dbReference type="EMBL" id="AJ235271">
    <property type="protein sequence ID" value="CAA14869.1"/>
    <property type="molecule type" value="Genomic_DNA"/>
</dbReference>
<dbReference type="PIR" id="C71699">
    <property type="entry name" value="C71699"/>
</dbReference>
<dbReference type="RefSeq" id="NP_220793.1">
    <property type="nucleotide sequence ID" value="NC_000963.1"/>
</dbReference>
<dbReference type="RefSeq" id="WP_004599455.1">
    <property type="nucleotide sequence ID" value="NC_000963.1"/>
</dbReference>
<dbReference type="SMR" id="Q9ZDC0"/>
<dbReference type="STRING" id="272947.gene:17555492"/>
<dbReference type="CAZy" id="GT28">
    <property type="family name" value="Glycosyltransferase Family 28"/>
</dbReference>
<dbReference type="EnsemblBacteria" id="CAA14869">
    <property type="protein sequence ID" value="CAA14869"/>
    <property type="gene ID" value="CAA14869"/>
</dbReference>
<dbReference type="GeneID" id="57569537"/>
<dbReference type="KEGG" id="rpr:RP412"/>
<dbReference type="PATRIC" id="fig|272947.5.peg.425"/>
<dbReference type="eggNOG" id="COG0707">
    <property type="taxonomic scope" value="Bacteria"/>
</dbReference>
<dbReference type="HOGENOM" id="CLU_037404_2_1_5"/>
<dbReference type="OrthoDB" id="9808936at2"/>
<dbReference type="UniPathway" id="UPA00219"/>
<dbReference type="Proteomes" id="UP000002480">
    <property type="component" value="Chromosome"/>
</dbReference>
<dbReference type="GO" id="GO:0005886">
    <property type="term" value="C:plasma membrane"/>
    <property type="evidence" value="ECO:0007669"/>
    <property type="project" value="UniProtKB-SubCell"/>
</dbReference>
<dbReference type="GO" id="GO:0051991">
    <property type="term" value="F:UDP-N-acetyl-D-glucosamine:N-acetylmuramoyl-L-alanyl-D-glutamyl-meso-2,6-diaminopimelyl-D-alanyl-D-alanine-diphosphoundecaprenol 4-beta-N-acetylglucosaminlytransferase activity"/>
    <property type="evidence" value="ECO:0007669"/>
    <property type="project" value="RHEA"/>
</dbReference>
<dbReference type="GO" id="GO:0050511">
    <property type="term" value="F:undecaprenyldiphospho-muramoylpentapeptide beta-N-acetylglucosaminyltransferase activity"/>
    <property type="evidence" value="ECO:0007669"/>
    <property type="project" value="UniProtKB-UniRule"/>
</dbReference>
<dbReference type="GO" id="GO:0005975">
    <property type="term" value="P:carbohydrate metabolic process"/>
    <property type="evidence" value="ECO:0007669"/>
    <property type="project" value="InterPro"/>
</dbReference>
<dbReference type="GO" id="GO:0051301">
    <property type="term" value="P:cell division"/>
    <property type="evidence" value="ECO:0007669"/>
    <property type="project" value="UniProtKB-KW"/>
</dbReference>
<dbReference type="GO" id="GO:0071555">
    <property type="term" value="P:cell wall organization"/>
    <property type="evidence" value="ECO:0007669"/>
    <property type="project" value="UniProtKB-KW"/>
</dbReference>
<dbReference type="GO" id="GO:0030259">
    <property type="term" value="P:lipid glycosylation"/>
    <property type="evidence" value="ECO:0007669"/>
    <property type="project" value="UniProtKB-UniRule"/>
</dbReference>
<dbReference type="GO" id="GO:0009252">
    <property type="term" value="P:peptidoglycan biosynthetic process"/>
    <property type="evidence" value="ECO:0007669"/>
    <property type="project" value="UniProtKB-UniRule"/>
</dbReference>
<dbReference type="GO" id="GO:0008360">
    <property type="term" value="P:regulation of cell shape"/>
    <property type="evidence" value="ECO:0007669"/>
    <property type="project" value="UniProtKB-KW"/>
</dbReference>
<dbReference type="CDD" id="cd03785">
    <property type="entry name" value="GT28_MurG"/>
    <property type="match status" value="1"/>
</dbReference>
<dbReference type="Gene3D" id="3.40.50.2000">
    <property type="entry name" value="Glycogen Phosphorylase B"/>
    <property type="match status" value="2"/>
</dbReference>
<dbReference type="HAMAP" id="MF_00033">
    <property type="entry name" value="MurG"/>
    <property type="match status" value="1"/>
</dbReference>
<dbReference type="InterPro" id="IPR006009">
    <property type="entry name" value="GlcNAc_MurG"/>
</dbReference>
<dbReference type="InterPro" id="IPR007235">
    <property type="entry name" value="Glyco_trans_28_C"/>
</dbReference>
<dbReference type="InterPro" id="IPR004276">
    <property type="entry name" value="GlycoTrans_28_N"/>
</dbReference>
<dbReference type="NCBIfam" id="TIGR01133">
    <property type="entry name" value="murG"/>
    <property type="match status" value="1"/>
</dbReference>
<dbReference type="PANTHER" id="PTHR21015:SF22">
    <property type="entry name" value="GLYCOSYLTRANSFERASE"/>
    <property type="match status" value="1"/>
</dbReference>
<dbReference type="PANTHER" id="PTHR21015">
    <property type="entry name" value="UDP-N-ACETYLGLUCOSAMINE--N-ACETYLMURAMYL-(PENTAPEPTIDE) PYROPHOSPHORYL-UNDECAPRENOL N-ACETYLGLUCOSAMINE TRANSFERASE 1"/>
    <property type="match status" value="1"/>
</dbReference>
<dbReference type="Pfam" id="PF04101">
    <property type="entry name" value="Glyco_tran_28_C"/>
    <property type="match status" value="1"/>
</dbReference>
<dbReference type="Pfam" id="PF03033">
    <property type="entry name" value="Glyco_transf_28"/>
    <property type="match status" value="1"/>
</dbReference>
<dbReference type="SUPFAM" id="SSF53756">
    <property type="entry name" value="UDP-Glycosyltransferase/glycogen phosphorylase"/>
    <property type="match status" value="1"/>
</dbReference>